<comment type="function">
    <text evidence="6">Alkylsulfatase that cleaves the widely used detergent sodium dodecyl sulfate (SDS), which allows the bacterium to use SDS as a sole carbon or sulfur source.</text>
</comment>
<comment type="catalytic activity">
    <reaction evidence="2">
        <text>a primary linear alkyl sulfate ester + H2O = a primary alcohol + sulfate + H(+)</text>
        <dbReference type="Rhea" id="RHEA:67908"/>
        <dbReference type="ChEBI" id="CHEBI:15377"/>
        <dbReference type="ChEBI" id="CHEBI:15378"/>
        <dbReference type="ChEBI" id="CHEBI:15734"/>
        <dbReference type="ChEBI" id="CHEBI:16189"/>
        <dbReference type="ChEBI" id="CHEBI:157685"/>
        <dbReference type="EC" id="3.1.6.21"/>
    </reaction>
</comment>
<comment type="cofactor">
    <cofactor evidence="2">
        <name>Zn(2+)</name>
        <dbReference type="ChEBI" id="CHEBI:29105"/>
    </cofactor>
    <text evidence="2">Binds 2 Zn(2+) ions per subunit.</text>
</comment>
<comment type="induction">
    <text evidence="3">Transcriptionally regulated by SdsB.</text>
</comment>
<comment type="similarity">
    <text evidence="5">Belongs to the metallo-beta-lactamase superfamily. Type III sulfatase family.</text>
</comment>
<comment type="caution">
    <text evidence="5">The N-terminus is shorter than orthologs.</text>
</comment>
<sequence>MIEAPEGLIIVDTGESVDQSRKVLAEFRKISDKPIKAIVYTHFHPDHINGVKAFVSEEQVKSGEVRIYAQETLLDNVVTQGSLVGPILTMRSGYSFGVALSDEDKRDMNAGLGPLAHEGASTFIAPTDTFRDSLDTTIAGLKVQFLHVPSEAPDEIVLYLPDNRVLISAEVTQGPTLPNVHTLRGTKFRDPVVWVASLDKLRAFQADVMVPLHGQPVSGREKVEEVLRMTRDAIAYIHDQTVRWMNKGLTPDELVEKVKLPPHLAGYTPYLREYYGTVKHSVRQIYQGYLGWFQGDPVDLDPIPPAEKARRLIALMGGRDKVLMAAGDAYLKGDWQWAAELSGYAIRVDHDDKLARDIKARSFRRLGYASMNINWRNWYLMSAMELEGKLEGDVALEMSRRVRAAFLSPDMLKNLPARIFLQNWVTRIDPEKSGDVELALGFAFPDIDEAWTLEVRRGVAQLKSGIDPAVPLRLTLDKRYLDTVISGENSLLKGALLGDVKVDGNLLDIKTFLGCFDFEDAPIALTVR</sequence>
<name>LPAKS_PSES9</name>
<gene>
    <name evidence="4" type="primary">sdsA</name>
</gene>
<keyword id="KW-0378">Hydrolase</keyword>
<keyword id="KW-0479">Metal-binding</keyword>
<keyword id="KW-0862">Zinc</keyword>
<feature type="chain" id="PRO_0000455160" description="Linear primary-alkylsulfatase">
    <location>
        <begin position="1"/>
        <end position="528"/>
    </location>
</feature>
<feature type="binding site" evidence="2">
    <location>
        <position position="42"/>
    </location>
    <ligand>
        <name>Zn(2+)</name>
        <dbReference type="ChEBI" id="CHEBI:29105"/>
        <label>1</label>
    </ligand>
</feature>
<feature type="binding site" evidence="2">
    <location>
        <position position="44"/>
    </location>
    <ligand>
        <name>Zn(2+)</name>
        <dbReference type="ChEBI" id="CHEBI:29105"/>
        <label>1</label>
    </ligand>
</feature>
<feature type="binding site" evidence="2">
    <location>
        <position position="46"/>
    </location>
    <ligand>
        <name>Zn(2+)</name>
        <dbReference type="ChEBI" id="CHEBI:29105"/>
        <label>2</label>
    </ligand>
</feature>
<feature type="binding site" evidence="2">
    <location>
        <position position="47"/>
    </location>
    <ligand>
        <name>Zn(2+)</name>
        <dbReference type="ChEBI" id="CHEBI:29105"/>
        <label>2</label>
    </ligand>
</feature>
<feature type="binding site" evidence="2">
    <location>
        <position position="151"/>
    </location>
    <ligand>
        <name>Zn(2+)</name>
        <dbReference type="ChEBI" id="CHEBI:29105"/>
        <label>1</label>
    </ligand>
</feature>
<feature type="binding site" evidence="2">
    <location>
        <position position="170"/>
    </location>
    <ligand>
        <name>Zn(2+)</name>
        <dbReference type="ChEBI" id="CHEBI:29105"/>
        <label>1</label>
    </ligand>
</feature>
<feature type="binding site" evidence="2">
    <location>
        <position position="170"/>
    </location>
    <ligand>
        <name>Zn(2+)</name>
        <dbReference type="ChEBI" id="CHEBI:29105"/>
        <label>2</label>
    </ligand>
</feature>
<feature type="binding site" evidence="1">
    <location>
        <begin position="179"/>
        <end position="184"/>
    </location>
    <ligand>
        <name>sulfate</name>
        <dbReference type="ChEBI" id="CHEBI:16189"/>
    </ligand>
</feature>
<feature type="binding site" evidence="1">
    <location>
        <position position="189"/>
    </location>
    <ligand>
        <name>sulfate</name>
        <dbReference type="ChEBI" id="CHEBI:16189"/>
    </ligand>
</feature>
<feature type="binding site" evidence="2">
    <location>
        <position position="213"/>
    </location>
    <ligand>
        <name>Zn(2+)</name>
        <dbReference type="ChEBI" id="CHEBI:29105"/>
        <label>2</label>
    </ligand>
</feature>
<feature type="binding site" evidence="1">
    <location>
        <position position="275"/>
    </location>
    <ligand>
        <name>sulfate</name>
        <dbReference type="ChEBI" id="CHEBI:16189"/>
    </ligand>
</feature>
<organism>
    <name type="scientific">Pseudomonas sp. (strain ATCC 19151)</name>
    <dbReference type="NCBI Taxonomy" id="315"/>
    <lineage>
        <taxon>Bacteria</taxon>
        <taxon>Pseudomonadati</taxon>
        <taxon>Pseudomonadota</taxon>
    </lineage>
</organism>
<reference key="1">
    <citation type="journal article" date="1992" name="Gene">
        <title>Cloning and sequencing of Pseudomonas genes determining sodium dodecyl sulfate biodegradation.</title>
        <authorList>
            <person name="Davison J."/>
            <person name="Brunel F."/>
            <person name="Phanopoulos A."/>
            <person name="Prozzi D."/>
            <person name="Terpstra P."/>
        </authorList>
    </citation>
    <scope>NUCLEOTIDE SEQUENCE [GENOMIC DNA]</scope>
    <scope>FUNCTION</scope>
    <scope>INDUCTION</scope>
    <source>
        <strain>ATCC 19151</strain>
    </source>
</reference>
<accession>Q52556</accession>
<evidence type="ECO:0000250" key="1">
    <source>
        <dbReference type="UniProtKB" id="P32717"/>
    </source>
</evidence>
<evidence type="ECO:0000250" key="2">
    <source>
        <dbReference type="UniProtKB" id="Q9I5I9"/>
    </source>
</evidence>
<evidence type="ECO:0000269" key="3">
    <source>
    </source>
</evidence>
<evidence type="ECO:0000303" key="4">
    <source>
    </source>
</evidence>
<evidence type="ECO:0000305" key="5"/>
<evidence type="ECO:0000305" key="6">
    <source>
    </source>
</evidence>
<proteinExistence type="evidence at transcript level"/>
<protein>
    <recommendedName>
        <fullName evidence="2">Linear primary-alkylsulfatase</fullName>
        <ecNumber evidence="2">3.1.6.21</ecNumber>
    </recommendedName>
    <alternativeName>
        <fullName evidence="4">SDSase</fullName>
    </alternativeName>
    <alternativeName>
        <fullName evidence="2">Type III linear primary-alkylsulfatase</fullName>
    </alternativeName>
</protein>
<dbReference type="EC" id="3.1.6.21" evidence="2"/>
<dbReference type="EMBL" id="M86744">
    <property type="protein sequence ID" value="AAA25989.1"/>
    <property type="molecule type" value="Genomic_DNA"/>
</dbReference>
<dbReference type="PIR" id="JC1118">
    <property type="entry name" value="JC1118"/>
</dbReference>
<dbReference type="SMR" id="Q52556"/>
<dbReference type="GO" id="GO:0018741">
    <property type="term" value="F:linear primary-alkylsulfatase activity"/>
    <property type="evidence" value="ECO:0007669"/>
    <property type="project" value="InterPro"/>
</dbReference>
<dbReference type="GO" id="GO:0046872">
    <property type="term" value="F:metal ion binding"/>
    <property type="evidence" value="ECO:0007669"/>
    <property type="project" value="UniProtKB-KW"/>
</dbReference>
<dbReference type="GO" id="GO:0046983">
    <property type="term" value="F:protein dimerization activity"/>
    <property type="evidence" value="ECO:0007669"/>
    <property type="project" value="InterPro"/>
</dbReference>
<dbReference type="GO" id="GO:0018909">
    <property type="term" value="P:dodecyl sulfate metabolic process"/>
    <property type="evidence" value="ECO:0007669"/>
    <property type="project" value="InterPro"/>
</dbReference>
<dbReference type="CDD" id="cd07710">
    <property type="entry name" value="arylsulfatase_Sdsa1-like_MBL-fold"/>
    <property type="match status" value="1"/>
</dbReference>
<dbReference type="Gene3D" id="1.25.40.880">
    <property type="entry name" value="Alkyl sulfatase, dimerisation domain"/>
    <property type="match status" value="1"/>
</dbReference>
<dbReference type="Gene3D" id="3.60.15.30">
    <property type="entry name" value="Metallo-beta-lactamase domain"/>
    <property type="match status" value="1"/>
</dbReference>
<dbReference type="Gene3D" id="3.30.1050.10">
    <property type="entry name" value="SCP2 sterol-binding domain"/>
    <property type="match status" value="1"/>
</dbReference>
<dbReference type="InterPro" id="IPR038536">
    <property type="entry name" value="Alkyl/aryl-sulf_dimr_sf"/>
</dbReference>
<dbReference type="InterPro" id="IPR029229">
    <property type="entry name" value="Alkyl_sulf_C"/>
</dbReference>
<dbReference type="InterPro" id="IPR029228">
    <property type="entry name" value="Alkyl_sulf_dimr"/>
</dbReference>
<dbReference type="InterPro" id="IPR052195">
    <property type="entry name" value="Bact_Alkyl/Aryl-Sulfatase"/>
</dbReference>
<dbReference type="InterPro" id="IPR044097">
    <property type="entry name" value="Bds1/SdsA1_MBL-fold"/>
</dbReference>
<dbReference type="InterPro" id="IPR001279">
    <property type="entry name" value="Metallo-B-lactamas"/>
</dbReference>
<dbReference type="InterPro" id="IPR036866">
    <property type="entry name" value="RibonucZ/Hydroxyglut_hydro"/>
</dbReference>
<dbReference type="InterPro" id="IPR036527">
    <property type="entry name" value="SCP2_sterol-bd_dom_sf"/>
</dbReference>
<dbReference type="PANTHER" id="PTHR43223">
    <property type="entry name" value="ALKYL/ARYL-SULFATASE"/>
    <property type="match status" value="1"/>
</dbReference>
<dbReference type="PANTHER" id="PTHR43223:SF1">
    <property type="entry name" value="ALKYL_ARYL-SULFATASE BDS1"/>
    <property type="match status" value="1"/>
</dbReference>
<dbReference type="Pfam" id="PF14864">
    <property type="entry name" value="Alkyl_sulf_C"/>
    <property type="match status" value="1"/>
</dbReference>
<dbReference type="Pfam" id="PF14863">
    <property type="entry name" value="Alkyl_sulf_dimr"/>
    <property type="match status" value="1"/>
</dbReference>
<dbReference type="Pfam" id="PF00753">
    <property type="entry name" value="Lactamase_B"/>
    <property type="match status" value="1"/>
</dbReference>
<dbReference type="SMART" id="SM00849">
    <property type="entry name" value="Lactamase_B"/>
    <property type="match status" value="1"/>
</dbReference>
<dbReference type="SUPFAM" id="SSF56281">
    <property type="entry name" value="Metallo-hydrolase/oxidoreductase"/>
    <property type="match status" value="1"/>
</dbReference>
<dbReference type="SUPFAM" id="SSF55718">
    <property type="entry name" value="SCP-like"/>
    <property type="match status" value="1"/>
</dbReference>